<proteinExistence type="inferred from homology"/>
<reference key="1">
    <citation type="journal article" date="2002" name="Proc. Natl. Acad. Sci. U.S.A.">
        <title>Complete genome sequence of Clostridium perfringens, an anaerobic flesh-eater.</title>
        <authorList>
            <person name="Shimizu T."/>
            <person name="Ohtani K."/>
            <person name="Hirakawa H."/>
            <person name="Ohshima K."/>
            <person name="Yamashita A."/>
            <person name="Shiba T."/>
            <person name="Ogasawara N."/>
            <person name="Hattori M."/>
            <person name="Kuhara S."/>
            <person name="Hayashi H."/>
        </authorList>
    </citation>
    <scope>NUCLEOTIDE SEQUENCE [LARGE SCALE GENOMIC DNA]</scope>
    <source>
        <strain>13 / Type A</strain>
    </source>
</reference>
<comment type="similarity">
    <text evidence="1">Belongs to the bacterial ribosomal protein bL36 family.</text>
</comment>
<dbReference type="EMBL" id="BA000016">
    <property type="protein sequence ID" value="BAB82086.1"/>
    <property type="molecule type" value="Genomic_DNA"/>
</dbReference>
<dbReference type="RefSeq" id="WP_003373491.1">
    <property type="nucleotide sequence ID" value="NC_003366.1"/>
</dbReference>
<dbReference type="SMR" id="Q8XHU7"/>
<dbReference type="STRING" id="195102.gene:10491697"/>
<dbReference type="GeneID" id="93001034"/>
<dbReference type="KEGG" id="cpe:CPE2380"/>
<dbReference type="HOGENOM" id="CLU_135723_6_2_9"/>
<dbReference type="Proteomes" id="UP000000818">
    <property type="component" value="Chromosome"/>
</dbReference>
<dbReference type="GO" id="GO:0005737">
    <property type="term" value="C:cytoplasm"/>
    <property type="evidence" value="ECO:0007669"/>
    <property type="project" value="UniProtKB-ARBA"/>
</dbReference>
<dbReference type="GO" id="GO:1990904">
    <property type="term" value="C:ribonucleoprotein complex"/>
    <property type="evidence" value="ECO:0007669"/>
    <property type="project" value="UniProtKB-KW"/>
</dbReference>
<dbReference type="GO" id="GO:0005840">
    <property type="term" value="C:ribosome"/>
    <property type="evidence" value="ECO:0007669"/>
    <property type="project" value="UniProtKB-KW"/>
</dbReference>
<dbReference type="GO" id="GO:0003735">
    <property type="term" value="F:structural constituent of ribosome"/>
    <property type="evidence" value="ECO:0007669"/>
    <property type="project" value="InterPro"/>
</dbReference>
<dbReference type="GO" id="GO:0006412">
    <property type="term" value="P:translation"/>
    <property type="evidence" value="ECO:0007669"/>
    <property type="project" value="UniProtKB-UniRule"/>
</dbReference>
<dbReference type="HAMAP" id="MF_00251">
    <property type="entry name" value="Ribosomal_bL36"/>
    <property type="match status" value="1"/>
</dbReference>
<dbReference type="InterPro" id="IPR000473">
    <property type="entry name" value="Ribosomal_bL36"/>
</dbReference>
<dbReference type="InterPro" id="IPR035977">
    <property type="entry name" value="Ribosomal_bL36_sp"/>
</dbReference>
<dbReference type="NCBIfam" id="TIGR01022">
    <property type="entry name" value="rpmJ_bact"/>
    <property type="match status" value="1"/>
</dbReference>
<dbReference type="PANTHER" id="PTHR42888">
    <property type="entry name" value="50S RIBOSOMAL PROTEIN L36, CHLOROPLASTIC"/>
    <property type="match status" value="1"/>
</dbReference>
<dbReference type="PANTHER" id="PTHR42888:SF1">
    <property type="entry name" value="LARGE RIBOSOMAL SUBUNIT PROTEIN BL36C"/>
    <property type="match status" value="1"/>
</dbReference>
<dbReference type="Pfam" id="PF00444">
    <property type="entry name" value="Ribosomal_L36"/>
    <property type="match status" value="1"/>
</dbReference>
<dbReference type="SUPFAM" id="SSF57840">
    <property type="entry name" value="Ribosomal protein L36"/>
    <property type="match status" value="1"/>
</dbReference>
<dbReference type="PROSITE" id="PS00828">
    <property type="entry name" value="RIBOSOMAL_L36"/>
    <property type="match status" value="1"/>
</dbReference>
<name>RL36_CLOPE</name>
<evidence type="ECO:0000255" key="1">
    <source>
        <dbReference type="HAMAP-Rule" id="MF_00251"/>
    </source>
</evidence>
<evidence type="ECO:0000305" key="2"/>
<keyword id="KW-1185">Reference proteome</keyword>
<keyword id="KW-0687">Ribonucleoprotein</keyword>
<keyword id="KW-0689">Ribosomal protein</keyword>
<organism>
    <name type="scientific">Clostridium perfringens (strain 13 / Type A)</name>
    <dbReference type="NCBI Taxonomy" id="195102"/>
    <lineage>
        <taxon>Bacteria</taxon>
        <taxon>Bacillati</taxon>
        <taxon>Bacillota</taxon>
        <taxon>Clostridia</taxon>
        <taxon>Eubacteriales</taxon>
        <taxon>Clostridiaceae</taxon>
        <taxon>Clostridium</taxon>
    </lineage>
</organism>
<sequence length="37" mass="4305">MKVRPSVKPICEKCKVIKRKGRVMVICENPKHKQKQG</sequence>
<feature type="chain" id="PRO_0000126176" description="Large ribosomal subunit protein bL36">
    <location>
        <begin position="1"/>
        <end position="37"/>
    </location>
</feature>
<protein>
    <recommendedName>
        <fullName evidence="1">Large ribosomal subunit protein bL36</fullName>
    </recommendedName>
    <alternativeName>
        <fullName evidence="2">50S ribosomal protein L36</fullName>
    </alternativeName>
</protein>
<gene>
    <name evidence="1" type="primary">rpmJ</name>
    <name type="ordered locus">CPE2380</name>
</gene>
<accession>Q8XHU7</accession>